<accession>B3CNB0</accession>
<sequence length="297" mass="34218">MKDNIVIITGITASGKSELCDNLIKKHKNISIINCDSKQVYKEIPVITAQPPKQKEFYRLYGYVSARENYSVGLWLEDLKREVNNALKNSRIPIITGGSGLYISSLIKGLSSIPQISQEVRENVNELRKNLSKEEFYKLVLSKDPRIQGKIFINDSHRLSRALEVITETGKTIFVWQENRQPPLFNNFKVYTILPKREDIYRKINSRFIEMVENGAIDEVKNLLSMNPSPHLPAMKAHGVPEIIRYLKGEITLDEAIQIAQTNTRHYAKRQYTWFKNQFPNSQVIDCANKLTEFGIF</sequence>
<name>MIAA_WOLPP</name>
<feature type="chain" id="PRO_0000377368" description="tRNA dimethylallyltransferase">
    <location>
        <begin position="1"/>
        <end position="297"/>
    </location>
</feature>
<feature type="region of interest" description="Interaction with substrate tRNA" evidence="1">
    <location>
        <begin position="36"/>
        <end position="39"/>
    </location>
</feature>
<feature type="binding site" evidence="1">
    <location>
        <begin position="10"/>
        <end position="17"/>
    </location>
    <ligand>
        <name>ATP</name>
        <dbReference type="ChEBI" id="CHEBI:30616"/>
    </ligand>
</feature>
<feature type="binding site" evidence="1">
    <location>
        <begin position="12"/>
        <end position="17"/>
    </location>
    <ligand>
        <name>substrate</name>
    </ligand>
</feature>
<feature type="site" description="Interaction with substrate tRNA" evidence="1">
    <location>
        <position position="99"/>
    </location>
</feature>
<feature type="site" description="Interaction with substrate tRNA" evidence="1">
    <location>
        <position position="121"/>
    </location>
</feature>
<gene>
    <name evidence="1" type="primary">miaA</name>
    <name type="ordered locus">WP0135</name>
</gene>
<dbReference type="EC" id="2.5.1.75" evidence="1"/>
<dbReference type="EMBL" id="AM999887">
    <property type="protein sequence ID" value="CAQ54243.1"/>
    <property type="molecule type" value="Genomic_DNA"/>
</dbReference>
<dbReference type="RefSeq" id="WP_007302715.1">
    <property type="nucleotide sequence ID" value="NC_010981.1"/>
</dbReference>
<dbReference type="SMR" id="B3CNB0"/>
<dbReference type="KEGG" id="wpi:WP0135"/>
<dbReference type="eggNOG" id="COG0324">
    <property type="taxonomic scope" value="Bacteria"/>
</dbReference>
<dbReference type="HOGENOM" id="CLU_032616_0_1_5"/>
<dbReference type="Proteomes" id="UP000008814">
    <property type="component" value="Chromosome"/>
</dbReference>
<dbReference type="GO" id="GO:0005524">
    <property type="term" value="F:ATP binding"/>
    <property type="evidence" value="ECO:0007669"/>
    <property type="project" value="UniProtKB-UniRule"/>
</dbReference>
<dbReference type="GO" id="GO:0052381">
    <property type="term" value="F:tRNA dimethylallyltransferase activity"/>
    <property type="evidence" value="ECO:0007669"/>
    <property type="project" value="UniProtKB-UniRule"/>
</dbReference>
<dbReference type="GO" id="GO:0006400">
    <property type="term" value="P:tRNA modification"/>
    <property type="evidence" value="ECO:0007669"/>
    <property type="project" value="TreeGrafter"/>
</dbReference>
<dbReference type="Gene3D" id="1.10.20.140">
    <property type="match status" value="1"/>
</dbReference>
<dbReference type="Gene3D" id="3.40.50.300">
    <property type="entry name" value="P-loop containing nucleotide triphosphate hydrolases"/>
    <property type="match status" value="1"/>
</dbReference>
<dbReference type="HAMAP" id="MF_00185">
    <property type="entry name" value="IPP_trans"/>
    <property type="match status" value="1"/>
</dbReference>
<dbReference type="InterPro" id="IPR039657">
    <property type="entry name" value="Dimethylallyltransferase"/>
</dbReference>
<dbReference type="InterPro" id="IPR018022">
    <property type="entry name" value="IPT"/>
</dbReference>
<dbReference type="InterPro" id="IPR027417">
    <property type="entry name" value="P-loop_NTPase"/>
</dbReference>
<dbReference type="NCBIfam" id="TIGR00174">
    <property type="entry name" value="miaA"/>
    <property type="match status" value="1"/>
</dbReference>
<dbReference type="PANTHER" id="PTHR11088">
    <property type="entry name" value="TRNA DIMETHYLALLYLTRANSFERASE"/>
    <property type="match status" value="1"/>
</dbReference>
<dbReference type="PANTHER" id="PTHR11088:SF60">
    <property type="entry name" value="TRNA DIMETHYLALLYLTRANSFERASE"/>
    <property type="match status" value="1"/>
</dbReference>
<dbReference type="Pfam" id="PF01715">
    <property type="entry name" value="IPPT"/>
    <property type="match status" value="1"/>
</dbReference>
<dbReference type="SUPFAM" id="SSF52540">
    <property type="entry name" value="P-loop containing nucleoside triphosphate hydrolases"/>
    <property type="match status" value="1"/>
</dbReference>
<protein>
    <recommendedName>
        <fullName evidence="1">tRNA dimethylallyltransferase</fullName>
        <ecNumber evidence="1">2.5.1.75</ecNumber>
    </recommendedName>
    <alternativeName>
        <fullName evidence="1">Dimethylallyl diphosphate:tRNA dimethylallyltransferase</fullName>
        <shortName evidence="1">DMAPP:tRNA dimethylallyltransferase</shortName>
        <shortName evidence="1">DMATase</shortName>
    </alternativeName>
    <alternativeName>
        <fullName evidence="1">Isopentenyl-diphosphate:tRNA isopentenyltransferase</fullName>
        <shortName evidence="1">IPP transferase</shortName>
        <shortName evidence="1">IPPT</shortName>
        <shortName evidence="1">IPTase</shortName>
    </alternativeName>
</protein>
<comment type="function">
    <text evidence="1">Catalyzes the transfer of a dimethylallyl group onto the adenine at position 37 in tRNAs that read codons beginning with uridine, leading to the formation of N6-(dimethylallyl)adenosine (i(6)A).</text>
</comment>
<comment type="catalytic activity">
    <reaction evidence="1">
        <text>adenosine(37) in tRNA + dimethylallyl diphosphate = N(6)-dimethylallyladenosine(37) in tRNA + diphosphate</text>
        <dbReference type="Rhea" id="RHEA:26482"/>
        <dbReference type="Rhea" id="RHEA-COMP:10162"/>
        <dbReference type="Rhea" id="RHEA-COMP:10375"/>
        <dbReference type="ChEBI" id="CHEBI:33019"/>
        <dbReference type="ChEBI" id="CHEBI:57623"/>
        <dbReference type="ChEBI" id="CHEBI:74411"/>
        <dbReference type="ChEBI" id="CHEBI:74415"/>
        <dbReference type="EC" id="2.5.1.75"/>
    </reaction>
</comment>
<comment type="cofactor">
    <cofactor evidence="1">
        <name>Mg(2+)</name>
        <dbReference type="ChEBI" id="CHEBI:18420"/>
    </cofactor>
</comment>
<comment type="subunit">
    <text evidence="1">Monomer.</text>
</comment>
<comment type="similarity">
    <text evidence="1">Belongs to the IPP transferase family.</text>
</comment>
<organism>
    <name type="scientific">Wolbachia pipientis subsp. Culex pipiens (strain wPip)</name>
    <dbReference type="NCBI Taxonomy" id="570417"/>
    <lineage>
        <taxon>Bacteria</taxon>
        <taxon>Pseudomonadati</taxon>
        <taxon>Pseudomonadota</taxon>
        <taxon>Alphaproteobacteria</taxon>
        <taxon>Rickettsiales</taxon>
        <taxon>Anaplasmataceae</taxon>
        <taxon>Wolbachieae</taxon>
        <taxon>Wolbachia</taxon>
    </lineage>
</organism>
<evidence type="ECO:0000255" key="1">
    <source>
        <dbReference type="HAMAP-Rule" id="MF_00185"/>
    </source>
</evidence>
<reference key="1">
    <citation type="journal article" date="2008" name="Mol. Biol. Evol.">
        <title>Genome evolution of Wolbachia strain wPip from the Culex pipiens group.</title>
        <authorList>
            <person name="Klasson L."/>
            <person name="Walker T."/>
            <person name="Sebaihia M."/>
            <person name="Sanders M.J."/>
            <person name="Quail M.A."/>
            <person name="Lord A."/>
            <person name="Sanders S."/>
            <person name="Earl J."/>
            <person name="O'Neill S.L."/>
            <person name="Thomson N."/>
            <person name="Sinkins S.P."/>
            <person name="Parkhill J."/>
        </authorList>
    </citation>
    <scope>NUCLEOTIDE SEQUENCE [LARGE SCALE GENOMIC DNA]</scope>
    <source>
        <strain>wPip</strain>
    </source>
</reference>
<keyword id="KW-0067">ATP-binding</keyword>
<keyword id="KW-0460">Magnesium</keyword>
<keyword id="KW-0547">Nucleotide-binding</keyword>
<keyword id="KW-0808">Transferase</keyword>
<keyword id="KW-0819">tRNA processing</keyword>
<proteinExistence type="inferred from homology"/>